<protein>
    <recommendedName>
        <fullName evidence="1">Histidine--tRNA ligase 2</fullName>
        <ecNumber evidence="1">6.1.1.21</ecNumber>
    </recommendedName>
    <alternativeName>
        <fullName evidence="1">Histidyl-tRNA synthetase 2</fullName>
        <shortName evidence="1">HisRS 2</shortName>
    </alternativeName>
</protein>
<reference key="1">
    <citation type="journal article" date="2003" name="Nature">
        <title>The genome sequence of Bacillus anthracis Ames and comparison to closely related bacteria.</title>
        <authorList>
            <person name="Read T.D."/>
            <person name="Peterson S.N."/>
            <person name="Tourasse N.J."/>
            <person name="Baillie L.W."/>
            <person name="Paulsen I.T."/>
            <person name="Nelson K.E."/>
            <person name="Tettelin H."/>
            <person name="Fouts D.E."/>
            <person name="Eisen J.A."/>
            <person name="Gill S.R."/>
            <person name="Holtzapple E.K."/>
            <person name="Okstad O.A."/>
            <person name="Helgason E."/>
            <person name="Rilstone J."/>
            <person name="Wu M."/>
            <person name="Kolonay J.F."/>
            <person name="Beanan M.J."/>
            <person name="Dodson R.J."/>
            <person name="Brinkac L.M."/>
            <person name="Gwinn M.L."/>
            <person name="DeBoy R.T."/>
            <person name="Madpu R."/>
            <person name="Daugherty S.C."/>
            <person name="Durkin A.S."/>
            <person name="Haft D.H."/>
            <person name="Nelson W.C."/>
            <person name="Peterson J.D."/>
            <person name="Pop M."/>
            <person name="Khouri H.M."/>
            <person name="Radune D."/>
            <person name="Benton J.L."/>
            <person name="Mahamoud Y."/>
            <person name="Jiang L."/>
            <person name="Hance I.R."/>
            <person name="Weidman J.F."/>
            <person name="Berry K.J."/>
            <person name="Plaut R.D."/>
            <person name="Wolf A.M."/>
            <person name="Watkins K.L."/>
            <person name="Nierman W.C."/>
            <person name="Hazen A."/>
            <person name="Cline R.T."/>
            <person name="Redmond C."/>
            <person name="Thwaite J.E."/>
            <person name="White O."/>
            <person name="Salzberg S.L."/>
            <person name="Thomason B."/>
            <person name="Friedlander A.M."/>
            <person name="Koehler T.M."/>
            <person name="Hanna P.C."/>
            <person name="Kolstoe A.-B."/>
            <person name="Fraser C.M."/>
        </authorList>
    </citation>
    <scope>NUCLEOTIDE SEQUENCE [LARGE SCALE GENOMIC DNA]</scope>
    <source>
        <strain>Ames / isolate Porton</strain>
    </source>
</reference>
<reference key="2">
    <citation type="journal article" date="2009" name="J. Bacteriol.">
        <title>The complete genome sequence of Bacillus anthracis Ames 'Ancestor'.</title>
        <authorList>
            <person name="Ravel J."/>
            <person name="Jiang L."/>
            <person name="Stanley S.T."/>
            <person name="Wilson M.R."/>
            <person name="Decker R.S."/>
            <person name="Read T.D."/>
            <person name="Worsham P."/>
            <person name="Keim P.S."/>
            <person name="Salzberg S.L."/>
            <person name="Fraser-Liggett C.M."/>
            <person name="Rasko D.A."/>
        </authorList>
    </citation>
    <scope>NUCLEOTIDE SEQUENCE [LARGE SCALE GENOMIC DNA]</scope>
    <source>
        <strain>Ames ancestor</strain>
    </source>
</reference>
<reference key="3">
    <citation type="submission" date="2004-01" db="EMBL/GenBank/DDBJ databases">
        <title>Complete genome sequence of Bacillus anthracis Sterne.</title>
        <authorList>
            <person name="Brettin T.S."/>
            <person name="Bruce D."/>
            <person name="Challacombe J.F."/>
            <person name="Gilna P."/>
            <person name="Han C."/>
            <person name="Hill K."/>
            <person name="Hitchcock P."/>
            <person name="Jackson P."/>
            <person name="Keim P."/>
            <person name="Longmire J."/>
            <person name="Lucas S."/>
            <person name="Okinaka R."/>
            <person name="Richardson P."/>
            <person name="Rubin E."/>
            <person name="Tice H."/>
        </authorList>
    </citation>
    <scope>NUCLEOTIDE SEQUENCE [LARGE SCALE GENOMIC DNA]</scope>
    <source>
        <strain>Sterne</strain>
    </source>
</reference>
<sequence>MSIQIPRGTQDILPGTVELWQYIEGQAREICRRYNYKEIRTPIFEHTELFLRGVGDTTDIVQKEMYSFQDRGERSLTLRPEGTAPVVRSYVENKMFGDATQPTKLYYIGQMFRYERPQAGRYRQFVQFGIEAIGSNDPAIDAEVIALAVEFYRGMGLKNIKVVLNSLGDAASRQAHRDALIAHFEPRIGEFCSDCQSRLEKNPLRILDCKKDRNHELMGTAPSITEYLNEDSAVYYDKVQELLTMMDVPFEKDPNLVRGLDYYQHTVFEIMSEAEGFGAITTLSGGGRYNGLVQEIGGPEMPGIGFAMSIERLIMALKAENIELPIEHSIDCYVVALGEKAKDHAAKVAFDLRKAGLAVEKDYLDRKMKAQFKSADRLKAKFVAVLGEDELDKGIINLKDMATGEQEEVALDVFASYVAEKLI</sequence>
<proteinExistence type="inferred from homology"/>
<comment type="catalytic activity">
    <reaction evidence="1">
        <text>tRNA(His) + L-histidine + ATP = L-histidyl-tRNA(His) + AMP + diphosphate + H(+)</text>
        <dbReference type="Rhea" id="RHEA:17313"/>
        <dbReference type="Rhea" id="RHEA-COMP:9665"/>
        <dbReference type="Rhea" id="RHEA-COMP:9689"/>
        <dbReference type="ChEBI" id="CHEBI:15378"/>
        <dbReference type="ChEBI" id="CHEBI:30616"/>
        <dbReference type="ChEBI" id="CHEBI:33019"/>
        <dbReference type="ChEBI" id="CHEBI:57595"/>
        <dbReference type="ChEBI" id="CHEBI:78442"/>
        <dbReference type="ChEBI" id="CHEBI:78527"/>
        <dbReference type="ChEBI" id="CHEBI:456215"/>
        <dbReference type="EC" id="6.1.1.21"/>
    </reaction>
</comment>
<comment type="subunit">
    <text evidence="1">Homodimer.</text>
</comment>
<comment type="subcellular location">
    <subcellularLocation>
        <location evidence="1">Cytoplasm</location>
    </subcellularLocation>
</comment>
<comment type="similarity">
    <text evidence="1">Belongs to the class-II aminoacyl-tRNA synthetase family.</text>
</comment>
<accession>Q81LI6</accession>
<accession>Q6HSZ2</accession>
<accession>Q6KM81</accession>
<keyword id="KW-0030">Aminoacyl-tRNA synthetase</keyword>
<keyword id="KW-0067">ATP-binding</keyword>
<keyword id="KW-0963">Cytoplasm</keyword>
<keyword id="KW-0436">Ligase</keyword>
<keyword id="KW-0547">Nucleotide-binding</keyword>
<keyword id="KW-0648">Protein biosynthesis</keyword>
<keyword id="KW-1185">Reference proteome</keyword>
<name>SYH2_BACAN</name>
<dbReference type="EC" id="6.1.1.21" evidence="1"/>
<dbReference type="EMBL" id="AE016879">
    <property type="protein sequence ID" value="AAP28336.1"/>
    <property type="molecule type" value="Genomic_DNA"/>
</dbReference>
<dbReference type="EMBL" id="AE017334">
    <property type="protein sequence ID" value="AAT33755.1"/>
    <property type="molecule type" value="Genomic_DNA"/>
</dbReference>
<dbReference type="EMBL" id="AE017225">
    <property type="protein sequence ID" value="AAT56597.1"/>
    <property type="molecule type" value="Genomic_DNA"/>
</dbReference>
<dbReference type="RefSeq" id="NP_846850.1">
    <property type="nucleotide sequence ID" value="NC_003997.3"/>
</dbReference>
<dbReference type="SMR" id="Q81LI6"/>
<dbReference type="STRING" id="261594.GBAA_4633"/>
<dbReference type="DNASU" id="1085478"/>
<dbReference type="GeneID" id="45024276"/>
<dbReference type="KEGG" id="ban:BA_4633"/>
<dbReference type="KEGG" id="banh:HYU01_22590"/>
<dbReference type="KEGG" id="bar:GBAA_4633"/>
<dbReference type="KEGG" id="bat:BAS4298"/>
<dbReference type="PATRIC" id="fig|198094.11.peg.4598"/>
<dbReference type="eggNOG" id="COG0124">
    <property type="taxonomic scope" value="Bacteria"/>
</dbReference>
<dbReference type="HOGENOM" id="CLU_025113_1_1_9"/>
<dbReference type="OMA" id="CGGGNFK"/>
<dbReference type="OrthoDB" id="9800814at2"/>
<dbReference type="Proteomes" id="UP000000427">
    <property type="component" value="Chromosome"/>
</dbReference>
<dbReference type="Proteomes" id="UP000000594">
    <property type="component" value="Chromosome"/>
</dbReference>
<dbReference type="GO" id="GO:0005737">
    <property type="term" value="C:cytoplasm"/>
    <property type="evidence" value="ECO:0007669"/>
    <property type="project" value="UniProtKB-SubCell"/>
</dbReference>
<dbReference type="GO" id="GO:0005524">
    <property type="term" value="F:ATP binding"/>
    <property type="evidence" value="ECO:0007669"/>
    <property type="project" value="UniProtKB-UniRule"/>
</dbReference>
<dbReference type="GO" id="GO:0140096">
    <property type="term" value="F:catalytic activity, acting on a protein"/>
    <property type="evidence" value="ECO:0007669"/>
    <property type="project" value="UniProtKB-ARBA"/>
</dbReference>
<dbReference type="GO" id="GO:0004821">
    <property type="term" value="F:histidine-tRNA ligase activity"/>
    <property type="evidence" value="ECO:0007669"/>
    <property type="project" value="UniProtKB-UniRule"/>
</dbReference>
<dbReference type="GO" id="GO:0016740">
    <property type="term" value="F:transferase activity"/>
    <property type="evidence" value="ECO:0007669"/>
    <property type="project" value="UniProtKB-ARBA"/>
</dbReference>
<dbReference type="GO" id="GO:0006427">
    <property type="term" value="P:histidyl-tRNA aminoacylation"/>
    <property type="evidence" value="ECO:0007669"/>
    <property type="project" value="UniProtKB-UniRule"/>
</dbReference>
<dbReference type="CDD" id="cd00773">
    <property type="entry name" value="HisRS-like_core"/>
    <property type="match status" value="1"/>
</dbReference>
<dbReference type="CDD" id="cd00859">
    <property type="entry name" value="HisRS_anticodon"/>
    <property type="match status" value="1"/>
</dbReference>
<dbReference type="FunFam" id="3.30.930.10:FF:000005">
    <property type="entry name" value="Histidine--tRNA ligase"/>
    <property type="match status" value="1"/>
</dbReference>
<dbReference type="FunFam" id="3.40.50.800:FF:000013">
    <property type="entry name" value="Histidine--tRNA ligase"/>
    <property type="match status" value="1"/>
</dbReference>
<dbReference type="Gene3D" id="3.40.50.800">
    <property type="entry name" value="Anticodon-binding domain"/>
    <property type="match status" value="1"/>
</dbReference>
<dbReference type="Gene3D" id="3.30.930.10">
    <property type="entry name" value="Bira Bifunctional Protein, Domain 2"/>
    <property type="match status" value="1"/>
</dbReference>
<dbReference type="HAMAP" id="MF_00127">
    <property type="entry name" value="His_tRNA_synth"/>
    <property type="match status" value="1"/>
</dbReference>
<dbReference type="InterPro" id="IPR006195">
    <property type="entry name" value="aa-tRNA-synth_II"/>
</dbReference>
<dbReference type="InterPro" id="IPR045864">
    <property type="entry name" value="aa-tRNA-synth_II/BPL/LPL"/>
</dbReference>
<dbReference type="InterPro" id="IPR004154">
    <property type="entry name" value="Anticodon-bd"/>
</dbReference>
<dbReference type="InterPro" id="IPR036621">
    <property type="entry name" value="Anticodon-bd_dom_sf"/>
</dbReference>
<dbReference type="InterPro" id="IPR015807">
    <property type="entry name" value="His-tRNA-ligase"/>
</dbReference>
<dbReference type="InterPro" id="IPR041715">
    <property type="entry name" value="HisRS-like_core"/>
</dbReference>
<dbReference type="InterPro" id="IPR004516">
    <property type="entry name" value="HisRS/HisZ"/>
</dbReference>
<dbReference type="InterPro" id="IPR033656">
    <property type="entry name" value="HisRS_anticodon"/>
</dbReference>
<dbReference type="NCBIfam" id="TIGR00442">
    <property type="entry name" value="hisS"/>
    <property type="match status" value="1"/>
</dbReference>
<dbReference type="PANTHER" id="PTHR43707:SF1">
    <property type="entry name" value="HISTIDINE--TRNA LIGASE, MITOCHONDRIAL-RELATED"/>
    <property type="match status" value="1"/>
</dbReference>
<dbReference type="PANTHER" id="PTHR43707">
    <property type="entry name" value="HISTIDYL-TRNA SYNTHETASE"/>
    <property type="match status" value="1"/>
</dbReference>
<dbReference type="Pfam" id="PF03129">
    <property type="entry name" value="HGTP_anticodon"/>
    <property type="match status" value="1"/>
</dbReference>
<dbReference type="Pfam" id="PF13393">
    <property type="entry name" value="tRNA-synt_His"/>
    <property type="match status" value="1"/>
</dbReference>
<dbReference type="PIRSF" id="PIRSF001549">
    <property type="entry name" value="His-tRNA_synth"/>
    <property type="match status" value="1"/>
</dbReference>
<dbReference type="SUPFAM" id="SSF52954">
    <property type="entry name" value="Class II aaRS ABD-related"/>
    <property type="match status" value="1"/>
</dbReference>
<dbReference type="SUPFAM" id="SSF55681">
    <property type="entry name" value="Class II aaRS and biotin synthetases"/>
    <property type="match status" value="1"/>
</dbReference>
<dbReference type="PROSITE" id="PS50862">
    <property type="entry name" value="AA_TRNA_LIGASE_II"/>
    <property type="match status" value="1"/>
</dbReference>
<feature type="chain" id="PRO_0000136094" description="Histidine--tRNA ligase 2">
    <location>
        <begin position="1"/>
        <end position="423"/>
    </location>
</feature>
<organism>
    <name type="scientific">Bacillus anthracis</name>
    <dbReference type="NCBI Taxonomy" id="1392"/>
    <lineage>
        <taxon>Bacteria</taxon>
        <taxon>Bacillati</taxon>
        <taxon>Bacillota</taxon>
        <taxon>Bacilli</taxon>
        <taxon>Bacillales</taxon>
        <taxon>Bacillaceae</taxon>
        <taxon>Bacillus</taxon>
        <taxon>Bacillus cereus group</taxon>
    </lineage>
</organism>
<evidence type="ECO:0000255" key="1">
    <source>
        <dbReference type="HAMAP-Rule" id="MF_00127"/>
    </source>
</evidence>
<gene>
    <name evidence="1" type="primary">hisS-2</name>
    <name type="ordered locus">BA_4633</name>
    <name type="ordered locus">GBAA_4633</name>
    <name type="ordered locus">BAS4298</name>
</gene>